<dbReference type="EMBL" id="CP001287">
    <property type="protein sequence ID" value="ACK67294.1"/>
    <property type="molecule type" value="Genomic_DNA"/>
</dbReference>
<dbReference type="RefSeq" id="WP_012596555.1">
    <property type="nucleotide sequence ID" value="NC_011726.1"/>
</dbReference>
<dbReference type="SMR" id="B7JZ83"/>
<dbReference type="STRING" id="41431.PCC8801_3324"/>
<dbReference type="KEGG" id="cyp:PCC8801_3324"/>
<dbReference type="eggNOG" id="COG2038">
    <property type="taxonomic scope" value="Bacteria"/>
</dbReference>
<dbReference type="HOGENOM" id="CLU_053134_1_0_3"/>
<dbReference type="OrthoDB" id="418257at2"/>
<dbReference type="Proteomes" id="UP000008204">
    <property type="component" value="Chromosome"/>
</dbReference>
<dbReference type="GO" id="GO:0008939">
    <property type="term" value="F:nicotinate-nucleotide-dimethylbenzimidazole phosphoribosyltransferase activity"/>
    <property type="evidence" value="ECO:0007669"/>
    <property type="project" value="InterPro"/>
</dbReference>
<dbReference type="CDD" id="cd02439">
    <property type="entry name" value="DMB-PRT_CobT"/>
    <property type="match status" value="1"/>
</dbReference>
<dbReference type="Gene3D" id="3.40.50.10210">
    <property type="match status" value="1"/>
</dbReference>
<dbReference type="HAMAP" id="MF_01086">
    <property type="entry name" value="UPF0284"/>
    <property type="match status" value="1"/>
</dbReference>
<dbReference type="InterPro" id="IPR003200">
    <property type="entry name" value="Nict_dMeBzImd_PRibTrfase"/>
</dbReference>
<dbReference type="InterPro" id="IPR002805">
    <property type="entry name" value="Nict_dMeBzImd_PRibTrfase_arc"/>
</dbReference>
<dbReference type="InterPro" id="IPR036087">
    <property type="entry name" value="Nict_dMeBzImd_PRibTrfase_sf"/>
</dbReference>
<dbReference type="NCBIfam" id="TIGR00303">
    <property type="entry name" value="nicotinate mononucleotide-dependent phosphoribosyltransferase CobT"/>
    <property type="match status" value="1"/>
</dbReference>
<dbReference type="NCBIfam" id="NF003373">
    <property type="entry name" value="PRK04447.1-6"/>
    <property type="match status" value="1"/>
</dbReference>
<dbReference type="PANTHER" id="PTHR38811">
    <property type="match status" value="1"/>
</dbReference>
<dbReference type="PANTHER" id="PTHR38811:SF1">
    <property type="entry name" value="UPF0284 PROTEIN SLL1500"/>
    <property type="match status" value="1"/>
</dbReference>
<dbReference type="SUPFAM" id="SSF52733">
    <property type="entry name" value="Nicotinate mononucleotide:5,6-dimethylbenzimidazole phosphoribosyltransferase (CobT)"/>
    <property type="match status" value="1"/>
</dbReference>
<name>Y3324_RIPO1</name>
<evidence type="ECO:0000255" key="1">
    <source>
        <dbReference type="HAMAP-Rule" id="MF_01086"/>
    </source>
</evidence>
<protein>
    <recommendedName>
        <fullName evidence="1">UPF0284 protein PCC8801_3324</fullName>
    </recommendedName>
</protein>
<accession>B7JZ83</accession>
<keyword id="KW-1185">Reference proteome</keyword>
<comment type="similarity">
    <text evidence="1">Belongs to the UPF0284 family.</text>
</comment>
<gene>
    <name type="ordered locus">PCC8801_3324</name>
</gene>
<sequence>MIEVYTEHEQGKKWLEKHKNCCPIFACILGFTATGLIPRISAAGATPEDRKYTAIADAEFLIKGIKSDYQYPLPSLKKGVSPVFITRALVESLNIPIYLFNAGLVYPPPIPHIDLGGIAANCLTTGKALPLTTIRHLFQQGLHWGEKLAINAPNSYLIISECVVGGTTTALAILTGLGIDATGKVNSSHPQCNHQQKSSIVRTGLTQAEFYPILQPIDPFSLVGAVGDPMQIVAAGMAIAASRQTGVLLAGGTQMLAVYALIKAIIHDYQESANLEKIVVGTTRWVAEDPTGDTVGLAQGIGKVSLLATKLSFLTSECPQLRIYEEGYVKEGVGAGGCAIAASLSYGWTQEQLLEAIESLVNAKKELF</sequence>
<reference key="1">
    <citation type="journal article" date="2011" name="MBio">
        <title>Novel metabolic attributes of the genus Cyanothece, comprising a group of unicellular nitrogen-fixing Cyanobacteria.</title>
        <authorList>
            <person name="Bandyopadhyay A."/>
            <person name="Elvitigala T."/>
            <person name="Welsh E."/>
            <person name="Stockel J."/>
            <person name="Liberton M."/>
            <person name="Min H."/>
            <person name="Sherman L.A."/>
            <person name="Pakrasi H.B."/>
        </authorList>
    </citation>
    <scope>NUCLEOTIDE SEQUENCE [LARGE SCALE GENOMIC DNA]</scope>
    <source>
        <strain>PCC 8801 / RF-1</strain>
    </source>
</reference>
<feature type="chain" id="PRO_1000136906" description="UPF0284 protein PCC8801_3324">
    <location>
        <begin position="1"/>
        <end position="368"/>
    </location>
</feature>
<organism>
    <name type="scientific">Rippkaea orientalis (strain PCC 8801 / RF-1)</name>
    <name type="common">Cyanothece sp. (strain PCC 8801)</name>
    <dbReference type="NCBI Taxonomy" id="41431"/>
    <lineage>
        <taxon>Bacteria</taxon>
        <taxon>Bacillati</taxon>
        <taxon>Cyanobacteriota</taxon>
        <taxon>Cyanophyceae</taxon>
        <taxon>Oscillatoriophycideae</taxon>
        <taxon>Chroococcales</taxon>
        <taxon>Aphanothecaceae</taxon>
        <taxon>Rippkaea</taxon>
        <taxon>Rippkaea orientalis</taxon>
    </lineage>
</organism>
<proteinExistence type="inferred from homology"/>